<sequence length="317" mass="35369">MSSISGLVEDEISSFFESSPPLKNKEEIVANLNQFIELNSSCQGGMRRIVCVTSGGTTVPLEQRCVRYIDNFSSGNRGAASTENFVKAGYAVIFLYRRGTCQPYCRYLPDDPFLECFEFPDAKNIQVHGSHSGAVKMAVMDQQAAVAEGRLLKLPFSTIYEYLQMLRLIATILKDVGPCSMFYLAAAVSDFYVPWLSMTEHKIESGSGPLDIRLAQVPKMLSILRSNWAPKAFCISFKLETDSKILLEKATKALQKYKVHAVVANELLTRKEEVVVVSSSGNVVVRRDSNKPESIVEDNLIRLLVDRHSTYIKESLT</sequence>
<proteinExistence type="evidence at protein level"/>
<name>PPCS1_ARATH</name>
<keyword id="KW-0173">Coenzyme A biosynthesis</keyword>
<keyword id="KW-0436">Ligase</keyword>
<keyword id="KW-1185">Reference proteome</keyword>
<gene>
    <name type="primary">PPCS1</name>
    <name type="synonym">COAB</name>
    <name type="synonym">COAB1</name>
    <name type="ordered locus">At1g12350</name>
    <name type="ORF">F5O11.7</name>
</gene>
<reference key="1">
    <citation type="journal article" date="2000" name="Nature">
        <title>Sequence and analysis of chromosome 1 of the plant Arabidopsis thaliana.</title>
        <authorList>
            <person name="Theologis A."/>
            <person name="Ecker J.R."/>
            <person name="Palm C.J."/>
            <person name="Federspiel N.A."/>
            <person name="Kaul S."/>
            <person name="White O."/>
            <person name="Alonso J."/>
            <person name="Altafi H."/>
            <person name="Araujo R."/>
            <person name="Bowman C.L."/>
            <person name="Brooks S.Y."/>
            <person name="Buehler E."/>
            <person name="Chan A."/>
            <person name="Chao Q."/>
            <person name="Chen H."/>
            <person name="Cheuk R.F."/>
            <person name="Chin C.W."/>
            <person name="Chung M.K."/>
            <person name="Conn L."/>
            <person name="Conway A.B."/>
            <person name="Conway A.R."/>
            <person name="Creasy T.H."/>
            <person name="Dewar K."/>
            <person name="Dunn P."/>
            <person name="Etgu P."/>
            <person name="Feldblyum T.V."/>
            <person name="Feng J.-D."/>
            <person name="Fong B."/>
            <person name="Fujii C.Y."/>
            <person name="Gill J.E."/>
            <person name="Goldsmith A.D."/>
            <person name="Haas B."/>
            <person name="Hansen N.F."/>
            <person name="Hughes B."/>
            <person name="Huizar L."/>
            <person name="Hunter J.L."/>
            <person name="Jenkins J."/>
            <person name="Johnson-Hopson C."/>
            <person name="Khan S."/>
            <person name="Khaykin E."/>
            <person name="Kim C.J."/>
            <person name="Koo H.L."/>
            <person name="Kremenetskaia I."/>
            <person name="Kurtz D.B."/>
            <person name="Kwan A."/>
            <person name="Lam B."/>
            <person name="Langin-Hooper S."/>
            <person name="Lee A."/>
            <person name="Lee J.M."/>
            <person name="Lenz C.A."/>
            <person name="Li J.H."/>
            <person name="Li Y.-P."/>
            <person name="Lin X."/>
            <person name="Liu S.X."/>
            <person name="Liu Z.A."/>
            <person name="Luros J.S."/>
            <person name="Maiti R."/>
            <person name="Marziali A."/>
            <person name="Militscher J."/>
            <person name="Miranda M."/>
            <person name="Nguyen M."/>
            <person name="Nierman W.C."/>
            <person name="Osborne B.I."/>
            <person name="Pai G."/>
            <person name="Peterson J."/>
            <person name="Pham P.K."/>
            <person name="Rizzo M."/>
            <person name="Rooney T."/>
            <person name="Rowley D."/>
            <person name="Sakano H."/>
            <person name="Salzberg S.L."/>
            <person name="Schwartz J.R."/>
            <person name="Shinn P."/>
            <person name="Southwick A.M."/>
            <person name="Sun H."/>
            <person name="Tallon L.J."/>
            <person name="Tambunga G."/>
            <person name="Toriumi M.J."/>
            <person name="Town C.D."/>
            <person name="Utterback T."/>
            <person name="Van Aken S."/>
            <person name="Vaysberg M."/>
            <person name="Vysotskaia V.S."/>
            <person name="Walker M."/>
            <person name="Wu D."/>
            <person name="Yu G."/>
            <person name="Fraser C.M."/>
            <person name="Venter J.C."/>
            <person name="Davis R.W."/>
        </authorList>
    </citation>
    <scope>NUCLEOTIDE SEQUENCE [LARGE SCALE GENOMIC DNA]</scope>
    <source>
        <strain>cv. Columbia</strain>
    </source>
</reference>
<reference key="2">
    <citation type="journal article" date="2017" name="Plant J.">
        <title>Araport11: a complete reannotation of the Arabidopsis thaliana reference genome.</title>
        <authorList>
            <person name="Cheng C.Y."/>
            <person name="Krishnakumar V."/>
            <person name="Chan A.P."/>
            <person name="Thibaud-Nissen F."/>
            <person name="Schobel S."/>
            <person name="Town C.D."/>
        </authorList>
    </citation>
    <scope>GENOME REANNOTATION</scope>
    <source>
        <strain>cv. Columbia</strain>
    </source>
</reference>
<reference key="3">
    <citation type="journal article" date="2002" name="Science">
        <title>Functional annotation of a full-length Arabidopsis cDNA collection.</title>
        <authorList>
            <person name="Seki M."/>
            <person name="Narusaka M."/>
            <person name="Kamiya A."/>
            <person name="Ishida J."/>
            <person name="Satou M."/>
            <person name="Sakurai T."/>
            <person name="Nakajima M."/>
            <person name="Enju A."/>
            <person name="Akiyama K."/>
            <person name="Oono Y."/>
            <person name="Muramatsu M."/>
            <person name="Hayashizaki Y."/>
            <person name="Kawai J."/>
            <person name="Carninci P."/>
            <person name="Itoh M."/>
            <person name="Ishii Y."/>
            <person name="Arakawa T."/>
            <person name="Shibata K."/>
            <person name="Shinagawa A."/>
            <person name="Shinozaki K."/>
        </authorList>
    </citation>
    <scope>NUCLEOTIDE SEQUENCE [LARGE SCALE MRNA]</scope>
    <source>
        <strain>cv. Columbia</strain>
    </source>
</reference>
<reference key="4">
    <citation type="journal article" date="2003" name="J. Biol. Chem.">
        <title>4'-phosphopantetheine and coenzyme A biosynthesis in plants.</title>
        <authorList>
            <person name="Kupke T."/>
            <person name="Hernandez-Acosta P."/>
            <person name="Culianez-Macia F.A."/>
        </authorList>
    </citation>
    <scope>FUNCTION</scope>
    <scope>CATALYTIC ACTIVITY</scope>
    <source>
        <strain>cv. Columbia</strain>
    </source>
</reference>
<protein>
    <recommendedName>
        <fullName>Phosphopantothenate--cysteine ligase 1</fullName>
        <ecNumber evidence="2">6.3.2.51</ecNumber>
    </recommendedName>
    <alternativeName>
        <fullName evidence="3">AtCoaB</fullName>
    </alternativeName>
    <alternativeName>
        <fullName>Phosphopantothenoylcysteine synthetase 1</fullName>
        <shortName>PPC synthetase 1</shortName>
    </alternativeName>
</protein>
<evidence type="ECO:0000250" key="1"/>
<evidence type="ECO:0000269" key="2">
    <source>
    </source>
</evidence>
<evidence type="ECO:0000303" key="3">
    <source>
    </source>
</evidence>
<evidence type="ECO:0000305" key="4"/>
<evidence type="ECO:0000305" key="5">
    <source>
    </source>
</evidence>
<accession>Q8GXR5</accession>
<accession>Q9LNB1</accession>
<feature type="chain" id="PRO_0000398831" description="Phosphopantothenate--cysteine ligase 1">
    <location>
        <begin position="1"/>
        <end position="317"/>
    </location>
</feature>
<comment type="function">
    <text evidence="2">Catalyzes the first step in the biosynthesis of coenzyme A from vitamin B5/pantothenate, where cysteine is conjugated to 4'-phosphopantothenate to form 4-phosphopantothenoylcysteine (PubMed:12860978). The catalytic activity is not CTP- but ATP-dependent (PubMed:12860978).</text>
</comment>
<comment type="catalytic activity">
    <reaction evidence="2">
        <text>(R)-4'-phosphopantothenate + L-cysteine + ATP = N-[(R)-4-phosphopantothenoyl]-L-cysteine + AMP + diphosphate + H(+)</text>
        <dbReference type="Rhea" id="RHEA:25156"/>
        <dbReference type="ChEBI" id="CHEBI:10986"/>
        <dbReference type="ChEBI" id="CHEBI:15378"/>
        <dbReference type="ChEBI" id="CHEBI:30616"/>
        <dbReference type="ChEBI" id="CHEBI:33019"/>
        <dbReference type="ChEBI" id="CHEBI:35235"/>
        <dbReference type="ChEBI" id="CHEBI:59458"/>
        <dbReference type="ChEBI" id="CHEBI:456215"/>
        <dbReference type="EC" id="6.3.2.51"/>
    </reaction>
    <physiologicalReaction direction="left-to-right" evidence="5">
        <dbReference type="Rhea" id="RHEA:25157"/>
    </physiologicalReaction>
</comment>
<comment type="pathway">
    <text>Cofactor biosynthesis; coenzyme A biosynthesis; CoA from (R)-pantothenate: step 2/5.</text>
</comment>
<comment type="subunit">
    <text evidence="1">Homodimer.</text>
</comment>
<comment type="similarity">
    <text evidence="4">Belongs to the PPC synthetase family.</text>
</comment>
<comment type="sequence caution" evidence="4">
    <conflict type="erroneous gene model prediction">
        <sequence resource="EMBL-CDS" id="AAF79631"/>
    </conflict>
    <text>The predicted gene has been split into 2 genes: At1g12340 and At1g12350.</text>
</comment>
<organism>
    <name type="scientific">Arabidopsis thaliana</name>
    <name type="common">Mouse-ear cress</name>
    <dbReference type="NCBI Taxonomy" id="3702"/>
    <lineage>
        <taxon>Eukaryota</taxon>
        <taxon>Viridiplantae</taxon>
        <taxon>Streptophyta</taxon>
        <taxon>Embryophyta</taxon>
        <taxon>Tracheophyta</taxon>
        <taxon>Spermatophyta</taxon>
        <taxon>Magnoliopsida</taxon>
        <taxon>eudicotyledons</taxon>
        <taxon>Gunneridae</taxon>
        <taxon>Pentapetalae</taxon>
        <taxon>rosids</taxon>
        <taxon>malvids</taxon>
        <taxon>Brassicales</taxon>
        <taxon>Brassicaceae</taxon>
        <taxon>Camelineae</taxon>
        <taxon>Arabidopsis</taxon>
    </lineage>
</organism>
<dbReference type="EC" id="6.3.2.51" evidence="2"/>
<dbReference type="EMBL" id="AC025416">
    <property type="protein sequence ID" value="AAF79631.1"/>
    <property type="status" value="ALT_SEQ"/>
    <property type="molecule type" value="Genomic_DNA"/>
</dbReference>
<dbReference type="EMBL" id="CP002684">
    <property type="protein sequence ID" value="AEE28869.1"/>
    <property type="molecule type" value="Genomic_DNA"/>
</dbReference>
<dbReference type="EMBL" id="CP002684">
    <property type="protein sequence ID" value="ANM59452.1"/>
    <property type="molecule type" value="Genomic_DNA"/>
</dbReference>
<dbReference type="EMBL" id="AK118086">
    <property type="protein sequence ID" value="BAC42714.1"/>
    <property type="molecule type" value="mRNA"/>
</dbReference>
<dbReference type="RefSeq" id="NP_001321808.1">
    <property type="nucleotide sequence ID" value="NM_001332031.1"/>
</dbReference>
<dbReference type="RefSeq" id="NP_563904.2">
    <property type="nucleotide sequence ID" value="NM_101107.4"/>
</dbReference>
<dbReference type="SMR" id="Q8GXR5"/>
<dbReference type="FunCoup" id="Q8GXR5">
    <property type="interactions" value="4383"/>
</dbReference>
<dbReference type="STRING" id="3702.Q8GXR5"/>
<dbReference type="iPTMnet" id="Q8GXR5"/>
<dbReference type="PaxDb" id="3702-AT1G12350.1"/>
<dbReference type="ProteomicsDB" id="249335"/>
<dbReference type="EnsemblPlants" id="AT1G12350.1">
    <property type="protein sequence ID" value="AT1G12350.1"/>
    <property type="gene ID" value="AT1G12350"/>
</dbReference>
<dbReference type="EnsemblPlants" id="AT1G12350.2">
    <property type="protein sequence ID" value="AT1G12350.2"/>
    <property type="gene ID" value="AT1G12350"/>
</dbReference>
<dbReference type="GeneID" id="837789"/>
<dbReference type="Gramene" id="AT1G12350.1">
    <property type="protein sequence ID" value="AT1G12350.1"/>
    <property type="gene ID" value="AT1G12350"/>
</dbReference>
<dbReference type="Gramene" id="AT1G12350.2">
    <property type="protein sequence ID" value="AT1G12350.2"/>
    <property type="gene ID" value="AT1G12350"/>
</dbReference>
<dbReference type="KEGG" id="ath:AT1G12350"/>
<dbReference type="Araport" id="AT1G12350"/>
<dbReference type="TAIR" id="AT1G12350">
    <property type="gene designation" value="COAB"/>
</dbReference>
<dbReference type="eggNOG" id="KOG2728">
    <property type="taxonomic scope" value="Eukaryota"/>
</dbReference>
<dbReference type="HOGENOM" id="CLU_042326_0_1_1"/>
<dbReference type="InParanoid" id="Q8GXR5"/>
<dbReference type="OMA" id="LERYQHH"/>
<dbReference type="OrthoDB" id="70224at2759"/>
<dbReference type="PhylomeDB" id="Q8GXR5"/>
<dbReference type="BioCyc" id="ARA:AT1G12350-MONOMER"/>
<dbReference type="BioCyc" id="MetaCyc:AT1G12350-MONOMER"/>
<dbReference type="UniPathway" id="UPA00241">
    <property type="reaction ID" value="UER00353"/>
</dbReference>
<dbReference type="PRO" id="PR:Q8GXR5"/>
<dbReference type="Proteomes" id="UP000006548">
    <property type="component" value="Chromosome 1"/>
</dbReference>
<dbReference type="ExpressionAtlas" id="Q8GXR5">
    <property type="expression patterns" value="baseline and differential"/>
</dbReference>
<dbReference type="GO" id="GO:0004632">
    <property type="term" value="F:phosphopantothenate--cysteine ligase activity"/>
    <property type="evidence" value="ECO:0000314"/>
    <property type="project" value="TAIR"/>
</dbReference>
<dbReference type="GO" id="GO:0015937">
    <property type="term" value="P:coenzyme A biosynthetic process"/>
    <property type="evidence" value="ECO:0000314"/>
    <property type="project" value="TAIR"/>
</dbReference>
<dbReference type="FunFam" id="3.40.50.10300:FF:000002">
    <property type="entry name" value="Phosphopantothenate--cysteine ligase 2"/>
    <property type="match status" value="1"/>
</dbReference>
<dbReference type="Gene3D" id="3.40.50.10300">
    <property type="entry name" value="CoaB-like"/>
    <property type="match status" value="1"/>
</dbReference>
<dbReference type="InterPro" id="IPR035929">
    <property type="entry name" value="CoaB-like_sf"/>
</dbReference>
<dbReference type="InterPro" id="IPR007085">
    <property type="entry name" value="DNA/pantothenate-metab_flavo_C"/>
</dbReference>
<dbReference type="PANTHER" id="PTHR12290">
    <property type="entry name" value="CORNICHON-RELATED"/>
    <property type="match status" value="1"/>
</dbReference>
<dbReference type="Pfam" id="PF04127">
    <property type="entry name" value="DFP"/>
    <property type="match status" value="2"/>
</dbReference>
<dbReference type="SUPFAM" id="SSF102645">
    <property type="entry name" value="CoaB-like"/>
    <property type="match status" value="1"/>
</dbReference>